<comment type="function">
    <text evidence="1">Controls the transcription of genes involved in arginine and lysine metabolism.</text>
</comment>
<comment type="subunit">
    <text evidence="1">Homodimer.</text>
</comment>
<comment type="similarity">
    <text evidence="2">Belongs to the LysR transcriptional regulatory family.</text>
</comment>
<accession>Q3YXV6</accession>
<protein>
    <recommendedName>
        <fullName evidence="1">HTH-type transcriptional regulator ArgP</fullName>
    </recommendedName>
</protein>
<proteinExistence type="inferred from homology"/>
<organism>
    <name type="scientific">Shigella sonnei (strain Ss046)</name>
    <dbReference type="NCBI Taxonomy" id="300269"/>
    <lineage>
        <taxon>Bacteria</taxon>
        <taxon>Pseudomonadati</taxon>
        <taxon>Pseudomonadota</taxon>
        <taxon>Gammaproteobacteria</taxon>
        <taxon>Enterobacterales</taxon>
        <taxon>Enterobacteriaceae</taxon>
        <taxon>Shigella</taxon>
    </lineage>
</organism>
<reference key="1">
    <citation type="journal article" date="2005" name="Nucleic Acids Res.">
        <title>Genome dynamics and diversity of Shigella species, the etiologic agents of bacillary dysentery.</title>
        <authorList>
            <person name="Yang F."/>
            <person name="Yang J."/>
            <person name="Zhang X."/>
            <person name="Chen L."/>
            <person name="Jiang Y."/>
            <person name="Yan Y."/>
            <person name="Tang X."/>
            <person name="Wang J."/>
            <person name="Xiong Z."/>
            <person name="Dong J."/>
            <person name="Xue Y."/>
            <person name="Zhu Y."/>
            <person name="Xu X."/>
            <person name="Sun L."/>
            <person name="Chen S."/>
            <person name="Nie H."/>
            <person name="Peng J."/>
            <person name="Xu J."/>
            <person name="Wang Y."/>
            <person name="Yuan Z."/>
            <person name="Wen Y."/>
            <person name="Yao Z."/>
            <person name="Shen Y."/>
            <person name="Qiang B."/>
            <person name="Hou Y."/>
            <person name="Yu J."/>
            <person name="Jin Q."/>
        </authorList>
    </citation>
    <scope>NUCLEOTIDE SEQUENCE [LARGE SCALE GENOMIC DNA]</scope>
    <source>
        <strain>Ss046</strain>
    </source>
</reference>
<sequence>MKRPDYRTLQALDAVIRERGFERAAQKLCITQSAVSQRIKQLENMFGQPLLVRTVPPRPTEQGQKLLALLRQVELLEEEWLGDEQTGSTPLLLSLAVNADSLATWLLPALAPVLADSPIRLNLQVEDETRTQERLRRGEVVGAVSIQHQALPSCLVDKLGALDYLFVSSKPFAEKYFPNGVTRSALLKAPVVAFDHLDDMHQAFLQQNFDLPPGSVPCHIVNSSEAFVQLARQGTTCCMIPHLQIEKELASGELIDLTPGLFQRRMLYWHRFAPESRMMRKVTDALLDYGHKVLRQD</sequence>
<dbReference type="EMBL" id="CP000038">
    <property type="protein sequence ID" value="AAZ89656.1"/>
    <property type="molecule type" value="Genomic_DNA"/>
</dbReference>
<dbReference type="RefSeq" id="WP_000828351.1">
    <property type="nucleotide sequence ID" value="NC_007384.1"/>
</dbReference>
<dbReference type="SMR" id="Q3YXV6"/>
<dbReference type="GeneID" id="93779084"/>
<dbReference type="KEGG" id="ssn:SSON_3067"/>
<dbReference type="HOGENOM" id="CLU_063829_0_0_6"/>
<dbReference type="Proteomes" id="UP000002529">
    <property type="component" value="Chromosome"/>
</dbReference>
<dbReference type="GO" id="GO:0003677">
    <property type="term" value="F:DNA binding"/>
    <property type="evidence" value="ECO:0007669"/>
    <property type="project" value="UniProtKB-UniRule"/>
</dbReference>
<dbReference type="GO" id="GO:0003700">
    <property type="term" value="F:DNA-binding transcription factor activity"/>
    <property type="evidence" value="ECO:0007669"/>
    <property type="project" value="UniProtKB-UniRule"/>
</dbReference>
<dbReference type="CDD" id="cd08428">
    <property type="entry name" value="PBP2_IciA_ArgP"/>
    <property type="match status" value="1"/>
</dbReference>
<dbReference type="FunFam" id="1.10.10.10:FF:000061">
    <property type="entry name" value="HTH-type transcriptional regulator ArgP"/>
    <property type="match status" value="1"/>
</dbReference>
<dbReference type="FunFam" id="3.40.190.290:FF:000002">
    <property type="entry name" value="HTH-type transcriptional regulator ArgP"/>
    <property type="match status" value="1"/>
</dbReference>
<dbReference type="Gene3D" id="3.40.190.290">
    <property type="match status" value="1"/>
</dbReference>
<dbReference type="Gene3D" id="1.10.10.10">
    <property type="entry name" value="Winged helix-like DNA-binding domain superfamily/Winged helix DNA-binding domain"/>
    <property type="match status" value="1"/>
</dbReference>
<dbReference type="HAMAP" id="MF_00513">
    <property type="entry name" value="HTH_type_ArgP"/>
    <property type="match status" value="1"/>
</dbReference>
<dbReference type="InterPro" id="IPR017685">
    <property type="entry name" value="ArgP"/>
</dbReference>
<dbReference type="InterPro" id="IPR023490">
    <property type="entry name" value="ArgP_gammaproteobact"/>
</dbReference>
<dbReference type="InterPro" id="IPR050176">
    <property type="entry name" value="LTTR"/>
</dbReference>
<dbReference type="InterPro" id="IPR005119">
    <property type="entry name" value="LysR_subst-bd"/>
</dbReference>
<dbReference type="InterPro" id="IPR000847">
    <property type="entry name" value="Tscrpt_reg_HTH_LysR"/>
</dbReference>
<dbReference type="InterPro" id="IPR036388">
    <property type="entry name" value="WH-like_DNA-bd_sf"/>
</dbReference>
<dbReference type="InterPro" id="IPR036390">
    <property type="entry name" value="WH_DNA-bd_sf"/>
</dbReference>
<dbReference type="NCBIfam" id="TIGR03298">
    <property type="entry name" value="argP"/>
    <property type="match status" value="1"/>
</dbReference>
<dbReference type="NCBIfam" id="NF002964">
    <property type="entry name" value="PRK03635.1"/>
    <property type="match status" value="1"/>
</dbReference>
<dbReference type="NCBIfam" id="NF009888">
    <property type="entry name" value="PRK13348.1"/>
    <property type="match status" value="1"/>
</dbReference>
<dbReference type="PANTHER" id="PTHR30579:SF2">
    <property type="entry name" value="HTH-TYPE TRANSCRIPTIONAL REGULATOR ARGP"/>
    <property type="match status" value="1"/>
</dbReference>
<dbReference type="PANTHER" id="PTHR30579">
    <property type="entry name" value="TRANSCRIPTIONAL REGULATOR"/>
    <property type="match status" value="1"/>
</dbReference>
<dbReference type="Pfam" id="PF00126">
    <property type="entry name" value="HTH_1"/>
    <property type="match status" value="1"/>
</dbReference>
<dbReference type="Pfam" id="PF03466">
    <property type="entry name" value="LysR_substrate"/>
    <property type="match status" value="1"/>
</dbReference>
<dbReference type="PRINTS" id="PR00039">
    <property type="entry name" value="HTHLYSR"/>
</dbReference>
<dbReference type="SUPFAM" id="SSF53850">
    <property type="entry name" value="Periplasmic binding protein-like II"/>
    <property type="match status" value="1"/>
</dbReference>
<dbReference type="SUPFAM" id="SSF46785">
    <property type="entry name" value="Winged helix' DNA-binding domain"/>
    <property type="match status" value="1"/>
</dbReference>
<dbReference type="PROSITE" id="PS50931">
    <property type="entry name" value="HTH_LYSR"/>
    <property type="match status" value="1"/>
</dbReference>
<keyword id="KW-0238">DNA-binding</keyword>
<keyword id="KW-1185">Reference proteome</keyword>
<keyword id="KW-0804">Transcription</keyword>
<keyword id="KW-0805">Transcription regulation</keyword>
<name>ARGP_SHISS</name>
<feature type="chain" id="PRO_0000258616" description="HTH-type transcriptional regulator ArgP">
    <location>
        <begin position="1"/>
        <end position="297"/>
    </location>
</feature>
<feature type="domain" description="HTH lysR-type" evidence="1">
    <location>
        <begin position="4"/>
        <end position="60"/>
    </location>
</feature>
<feature type="DNA-binding region" description="H-T-H motif" evidence="1">
    <location>
        <begin position="21"/>
        <end position="40"/>
    </location>
</feature>
<evidence type="ECO:0000255" key="1">
    <source>
        <dbReference type="HAMAP-Rule" id="MF_00513"/>
    </source>
</evidence>
<evidence type="ECO:0000305" key="2"/>
<gene>
    <name evidence="1" type="primary">argP</name>
    <name type="synonym">iciA</name>
    <name type="ordered locus">SSON_3067</name>
</gene>